<feature type="chain" id="PRO_0000296495" description="Large ribosomal subunit protein bL32">
    <location>
        <begin position="1"/>
        <end position="59"/>
    </location>
</feature>
<feature type="region of interest" description="Disordered" evidence="2">
    <location>
        <begin position="1"/>
        <end position="21"/>
    </location>
</feature>
<comment type="similarity">
    <text evidence="1">Belongs to the bacterial ribosomal protein bL32 family.</text>
</comment>
<accession>A0L859</accession>
<organism>
    <name type="scientific">Magnetococcus marinus (strain ATCC BAA-1437 / JCM 17883 / MC-1)</name>
    <dbReference type="NCBI Taxonomy" id="156889"/>
    <lineage>
        <taxon>Bacteria</taxon>
        <taxon>Pseudomonadati</taxon>
        <taxon>Pseudomonadota</taxon>
        <taxon>Alphaproteobacteria</taxon>
        <taxon>Magnetococcales</taxon>
        <taxon>Magnetococcaceae</taxon>
        <taxon>Magnetococcus</taxon>
    </lineage>
</organism>
<evidence type="ECO:0000255" key="1">
    <source>
        <dbReference type="HAMAP-Rule" id="MF_00340"/>
    </source>
</evidence>
<evidence type="ECO:0000256" key="2">
    <source>
        <dbReference type="SAM" id="MobiDB-lite"/>
    </source>
</evidence>
<evidence type="ECO:0000305" key="3"/>
<name>RL32_MAGMM</name>
<keyword id="KW-1185">Reference proteome</keyword>
<keyword id="KW-0687">Ribonucleoprotein</keyword>
<keyword id="KW-0689">Ribosomal protein</keyword>
<dbReference type="EMBL" id="CP000471">
    <property type="protein sequence ID" value="ABK44152.1"/>
    <property type="molecule type" value="Genomic_DNA"/>
</dbReference>
<dbReference type="RefSeq" id="WP_011713300.1">
    <property type="nucleotide sequence ID" value="NC_008576.1"/>
</dbReference>
<dbReference type="SMR" id="A0L859"/>
<dbReference type="STRING" id="156889.Mmc1_1643"/>
<dbReference type="KEGG" id="mgm:Mmc1_1643"/>
<dbReference type="eggNOG" id="COG0333">
    <property type="taxonomic scope" value="Bacteria"/>
</dbReference>
<dbReference type="HOGENOM" id="CLU_129084_1_3_5"/>
<dbReference type="OrthoDB" id="9801927at2"/>
<dbReference type="Proteomes" id="UP000002586">
    <property type="component" value="Chromosome"/>
</dbReference>
<dbReference type="GO" id="GO:0015934">
    <property type="term" value="C:large ribosomal subunit"/>
    <property type="evidence" value="ECO:0007669"/>
    <property type="project" value="InterPro"/>
</dbReference>
<dbReference type="GO" id="GO:0003735">
    <property type="term" value="F:structural constituent of ribosome"/>
    <property type="evidence" value="ECO:0007669"/>
    <property type="project" value="InterPro"/>
</dbReference>
<dbReference type="GO" id="GO:0006412">
    <property type="term" value="P:translation"/>
    <property type="evidence" value="ECO:0007669"/>
    <property type="project" value="UniProtKB-UniRule"/>
</dbReference>
<dbReference type="HAMAP" id="MF_00340">
    <property type="entry name" value="Ribosomal_bL32"/>
    <property type="match status" value="1"/>
</dbReference>
<dbReference type="InterPro" id="IPR002677">
    <property type="entry name" value="Ribosomal_bL32"/>
</dbReference>
<dbReference type="InterPro" id="IPR044957">
    <property type="entry name" value="Ribosomal_bL32_bact"/>
</dbReference>
<dbReference type="InterPro" id="IPR011332">
    <property type="entry name" value="Ribosomal_zn-bd"/>
</dbReference>
<dbReference type="NCBIfam" id="TIGR01031">
    <property type="entry name" value="rpmF_bact"/>
    <property type="match status" value="1"/>
</dbReference>
<dbReference type="PANTHER" id="PTHR35534">
    <property type="entry name" value="50S RIBOSOMAL PROTEIN L32"/>
    <property type="match status" value="1"/>
</dbReference>
<dbReference type="PANTHER" id="PTHR35534:SF1">
    <property type="entry name" value="LARGE RIBOSOMAL SUBUNIT PROTEIN BL32"/>
    <property type="match status" value="1"/>
</dbReference>
<dbReference type="Pfam" id="PF01783">
    <property type="entry name" value="Ribosomal_L32p"/>
    <property type="match status" value="1"/>
</dbReference>
<dbReference type="SUPFAM" id="SSF57829">
    <property type="entry name" value="Zn-binding ribosomal proteins"/>
    <property type="match status" value="1"/>
</dbReference>
<proteinExistence type="inferred from homology"/>
<sequence length="59" mass="6572">MAVPKKKSSKSKGRSRAAHHAIKAPNLTSCSNCQEPMMPHRVCPKCGWYDGREVVSMEE</sequence>
<protein>
    <recommendedName>
        <fullName evidence="1">Large ribosomal subunit protein bL32</fullName>
    </recommendedName>
    <alternativeName>
        <fullName evidence="3">50S ribosomal protein L32</fullName>
    </alternativeName>
</protein>
<reference key="1">
    <citation type="journal article" date="2009" name="Appl. Environ. Microbiol.">
        <title>Complete genome sequence of the chemolithoautotrophic marine magnetotactic coccus strain MC-1.</title>
        <authorList>
            <person name="Schubbe S."/>
            <person name="Williams T.J."/>
            <person name="Xie G."/>
            <person name="Kiss H.E."/>
            <person name="Brettin T.S."/>
            <person name="Martinez D."/>
            <person name="Ross C.A."/>
            <person name="Schuler D."/>
            <person name="Cox B.L."/>
            <person name="Nealson K.H."/>
            <person name="Bazylinski D.A."/>
        </authorList>
    </citation>
    <scope>NUCLEOTIDE SEQUENCE [LARGE SCALE GENOMIC DNA]</scope>
    <source>
        <strain>ATCC BAA-1437 / JCM 17883 / MC-1</strain>
    </source>
</reference>
<gene>
    <name evidence="1" type="primary">rpmF</name>
    <name type="ordered locus">Mmc1_1643</name>
</gene>